<sequence>MKYLKGLLLPALLALAPSATAAKDAPSIETTTFSNELVNLQYFDDSTVALVQELGSGKIYRSPDAGKAWKELKDLKKGLGIIKNPYDNKVALVLGEEQHWITYDQGETWQDFKTEYSPSPNGPVSWHSQDNKKILIHEIEDCLFTPCLGLTYYTTDGFKTKPKTLVEGRRMCQWAKGSERFLEGQEKHDDRILCILRGKYSDRSKDFRLMISDDYFKTAEEPVMSSGRTVQGMANMAAVKGYLVAAVKADHSSELSLYVTQDTENWHHAQFGNGKIEEDAYTILESTNYSIQVDVMSSKYVSIGSLYTSNSDGLYFTKNVDNTNRNPDGFVDFEKIANIQGVVLVNIVDNAKAVQERGAHKKLKSRISFDDGRTFEELKVKGSDKELHLHSSPGIVMGVGNTGDELGKYTDGDLYVSDDAGLTWELALDEAHKYEFGDQGSVLVAVFDEGDTDKVMYSLKHGRKDTWKSIDLGYKIRARELTTLSDSTSLRFLLYGSKKKDGGGREHVLIQLDFNDLHERKCEDKDFDPKWSDPTPTFESCECDEFRDFECDFGFKPEGEGKDKKCVPEKLTLPKDACKNGDSTYMGSSGWRKISGNQCKGGSKKDEKTERKCDEADLPPPKSDKITSEITRFKGSNFLEQYYLERSTQNDDDETDHDETVVMLTDERTAWITHDHGKQWKKAVDDEVVRIYPHQYDNNYVYFLTASKKVHYSEDRGLRNSIHSFEAPVMPNQEMLQILQFHPKQKGWLIWMGGKNCEKVNSKECHTAAYVSQKNGKDESWEPLVSYVKKCAFVWREAGRDVKEERVFCEQHANEETGAPLQLISSDDWFKKQDVKFKSVVEIALMSEFIIVATKEKDDTLRLDASLDANTFAEARFPPKFFDIHQTAYTVLDSSTHAIFLHVTVNPRVDQEYGSIIKSNSNGTSYVLSLNAVNRNTEGYVDFEKMQGLEGVAIANVVVNVNEVNDGAKKKKQTRITHNDGADWREKDAEGKAYECAGKGEEKCALHVHGYTERADPREMYSSPTAVGLMLAVGNVGEELGTFGEADTYMTTDAGLTWKEIKKGSYAWEFGDQGSVIVIVRRGEDTDHVYYTLDSGEKWNLYQFSERKIRVDAITTVPSDTSLNFLLWGKDGKELVAVNLDFSGLPQFQRKCDLDEKDPEKGDFDLWIPQHPLQPDDKQCLFGHVAEYHRKKRDAECRNGQRIDHMHNIQRNCTCTRRDYECAYNYERQPGGECKLIEGLDLEDPTAVCSKGAKEFWDVSPYRKIPLSTCEGGNEFDHMGDVHPCPGFEEEFEKKHGISGFGLFMAIVLPFAAAGGIGYYVWRNWDGKFGRIRLGENGGAFDSDSRWVQWPIAAISGLVAVVAAIPMLVGSLYRMVTGRMGGGYGGRTYTSRSSFARGRGDYAVVDPDEGELLGDDSDEEV</sequence>
<reference key="1">
    <citation type="journal article" date="2007" name="Plant Cell">
        <title>Dothideomycete-plant interactions illuminated by genome sequencing and EST analysis of the wheat pathogen Stagonospora nodorum.</title>
        <authorList>
            <person name="Hane J.K."/>
            <person name="Lowe R.G.T."/>
            <person name="Solomon P.S."/>
            <person name="Tan K.-C."/>
            <person name="Schoch C.L."/>
            <person name="Spatafora J.W."/>
            <person name="Crous P.W."/>
            <person name="Kodira C.D."/>
            <person name="Birren B.W."/>
            <person name="Galagan J.E."/>
            <person name="Torriani S.F.F."/>
            <person name="McDonald B.A."/>
            <person name="Oliver R.P."/>
        </authorList>
    </citation>
    <scope>NUCLEOTIDE SEQUENCE [LARGE SCALE GENOMIC DNA]</scope>
    <source>
        <strain>SN15 / ATCC MYA-4574 / FGSC 10173</strain>
    </source>
</reference>
<organism>
    <name type="scientific">Phaeosphaeria nodorum (strain SN15 / ATCC MYA-4574 / FGSC 10173)</name>
    <name type="common">Glume blotch fungus</name>
    <name type="synonym">Parastagonospora nodorum</name>
    <dbReference type="NCBI Taxonomy" id="321614"/>
    <lineage>
        <taxon>Eukaryota</taxon>
        <taxon>Fungi</taxon>
        <taxon>Dikarya</taxon>
        <taxon>Ascomycota</taxon>
        <taxon>Pezizomycotina</taxon>
        <taxon>Dothideomycetes</taxon>
        <taxon>Pleosporomycetidae</taxon>
        <taxon>Pleosporales</taxon>
        <taxon>Pleosporineae</taxon>
        <taxon>Phaeosphaeriaceae</taxon>
        <taxon>Parastagonospora</taxon>
    </lineage>
</organism>
<keyword id="KW-0325">Glycoprotein</keyword>
<keyword id="KW-0333">Golgi apparatus</keyword>
<keyword id="KW-0472">Membrane</keyword>
<keyword id="KW-0653">Protein transport</keyword>
<keyword id="KW-0675">Receptor</keyword>
<keyword id="KW-0677">Repeat</keyword>
<keyword id="KW-0732">Signal</keyword>
<keyword id="KW-0812">Transmembrane</keyword>
<keyword id="KW-1133">Transmembrane helix</keyword>
<keyword id="KW-0813">Transport</keyword>
<feature type="signal peptide" evidence="2">
    <location>
        <begin position="1"/>
        <end position="21"/>
    </location>
</feature>
<feature type="chain" id="PRO_0000407531" description="Vacuolar protein sorting/targeting protein 10">
    <location>
        <begin position="22"/>
        <end position="1421"/>
    </location>
</feature>
<feature type="topological domain" description="Lumenal" evidence="2">
    <location>
        <begin position="22"/>
        <end position="1296"/>
    </location>
</feature>
<feature type="transmembrane region" description="Helical" evidence="2">
    <location>
        <begin position="1297"/>
        <end position="1317"/>
    </location>
</feature>
<feature type="topological domain" description="Cytoplasmic" evidence="2">
    <location>
        <begin position="1318"/>
        <end position="1349"/>
    </location>
</feature>
<feature type="transmembrane region" description="Helical" evidence="2">
    <location>
        <begin position="1350"/>
        <end position="1370"/>
    </location>
</feature>
<feature type="topological domain" description="Lumenal" evidence="2">
    <location>
        <begin position="1371"/>
        <end position="1421"/>
    </location>
</feature>
<feature type="repeat" description="BNR 1">
    <location>
        <begin position="100"/>
        <end position="110"/>
    </location>
</feature>
<feature type="repeat" description="BNR 2">
    <location>
        <begin position="367"/>
        <end position="376"/>
    </location>
</feature>
<feature type="repeat" description="BNR 3">
    <location>
        <begin position="415"/>
        <end position="425"/>
    </location>
</feature>
<feature type="repeat" description="BNR 4">
    <location>
        <begin position="671"/>
        <end position="682"/>
    </location>
</feature>
<feature type="repeat" description="BNR 5">
    <location>
        <begin position="1049"/>
        <end position="1059"/>
    </location>
</feature>
<feature type="region of interest" description="Disordered" evidence="3">
    <location>
        <begin position="596"/>
        <end position="625"/>
    </location>
</feature>
<feature type="compositionally biased region" description="Basic and acidic residues" evidence="3">
    <location>
        <begin position="603"/>
        <end position="615"/>
    </location>
</feature>
<feature type="glycosylation site" description="N-linked (GlcNAc...) asparagine" evidence="2">
    <location>
        <position position="288"/>
    </location>
</feature>
<feature type="glycosylation site" description="N-linked (GlcNAc...) asparagine" evidence="2">
    <location>
        <position position="922"/>
    </location>
</feature>
<feature type="glycosylation site" description="N-linked (GlcNAc...) asparagine" evidence="2">
    <location>
        <position position="1212"/>
    </location>
</feature>
<proteinExistence type="inferred from homology"/>
<accession>Q0TVB2</accession>
<protein>
    <recommendedName>
        <fullName>Vacuolar protein sorting/targeting protein 10</fullName>
    </recommendedName>
    <alternativeName>
        <fullName>Carboxypeptidase Y receptor</fullName>
        <shortName>CPY receptor</shortName>
    </alternativeName>
    <alternativeName>
        <fullName>Sortilin VPS10</fullName>
    </alternativeName>
    <alternativeName>
        <fullName>Vacuolar carboxypeptidase sorting receptor VPS10</fullName>
    </alternativeName>
</protein>
<dbReference type="EMBL" id="CH445374">
    <property type="protein sequence ID" value="EAT76092.2"/>
    <property type="molecule type" value="Genomic_DNA"/>
</dbReference>
<dbReference type="RefSeq" id="XP_001806659.1">
    <property type="nucleotide sequence ID" value="XM_001806607.1"/>
</dbReference>
<dbReference type="SMR" id="Q0TVB2"/>
<dbReference type="FunCoup" id="Q0TVB2">
    <property type="interactions" value="176"/>
</dbReference>
<dbReference type="STRING" id="321614.Q0TVB2"/>
<dbReference type="GlyCosmos" id="Q0TVB2">
    <property type="glycosylation" value="3 sites, No reported glycans"/>
</dbReference>
<dbReference type="EnsemblFungi" id="SNOT_16552">
    <property type="protein sequence ID" value="SNOT_16552"/>
    <property type="gene ID" value="SNOG_16552"/>
</dbReference>
<dbReference type="GeneID" id="5983591"/>
<dbReference type="KEGG" id="pno:SNOG_16552"/>
<dbReference type="VEuPathDB" id="FungiDB:JI435_165520"/>
<dbReference type="eggNOG" id="KOG3511">
    <property type="taxonomic scope" value="Eukaryota"/>
</dbReference>
<dbReference type="HOGENOM" id="CLU_000700_0_0_1"/>
<dbReference type="InParanoid" id="Q0TVB2"/>
<dbReference type="Proteomes" id="UP000001055">
    <property type="component" value="Unassembled WGS sequence"/>
</dbReference>
<dbReference type="GO" id="GO:0005829">
    <property type="term" value="C:cytosol"/>
    <property type="evidence" value="ECO:0007669"/>
    <property type="project" value="GOC"/>
</dbReference>
<dbReference type="GO" id="GO:0005794">
    <property type="term" value="C:Golgi apparatus"/>
    <property type="evidence" value="ECO:0000318"/>
    <property type="project" value="GO_Central"/>
</dbReference>
<dbReference type="GO" id="GO:0016020">
    <property type="term" value="C:membrane"/>
    <property type="evidence" value="ECO:0000318"/>
    <property type="project" value="GO_Central"/>
</dbReference>
<dbReference type="GO" id="GO:0006895">
    <property type="term" value="P:Golgi to endosome transport"/>
    <property type="evidence" value="ECO:0000318"/>
    <property type="project" value="GO_Central"/>
</dbReference>
<dbReference type="GO" id="GO:0006896">
    <property type="term" value="P:Golgi to vacuole transport"/>
    <property type="evidence" value="ECO:0000318"/>
    <property type="project" value="GO_Central"/>
</dbReference>
<dbReference type="GO" id="GO:0006623">
    <property type="term" value="P:protein targeting to vacuole"/>
    <property type="evidence" value="ECO:0000318"/>
    <property type="project" value="GO_Central"/>
</dbReference>
<dbReference type="FunFam" id="3.30.60.270:FF:000005">
    <property type="entry name" value="Sortilin"/>
    <property type="match status" value="2"/>
</dbReference>
<dbReference type="Gene3D" id="2.10.70.80">
    <property type="match status" value="1"/>
</dbReference>
<dbReference type="Gene3D" id="3.30.60.270">
    <property type="match status" value="2"/>
</dbReference>
<dbReference type="Gene3D" id="2.130.10.10">
    <property type="entry name" value="YVTN repeat-like/Quinoprotein amine dehydrogenase"/>
    <property type="match status" value="1"/>
</dbReference>
<dbReference type="InterPro" id="IPR036278">
    <property type="entry name" value="Sialidase_sf"/>
</dbReference>
<dbReference type="InterPro" id="IPR031777">
    <property type="entry name" value="Sortilin_C"/>
</dbReference>
<dbReference type="InterPro" id="IPR031778">
    <property type="entry name" value="Sortilin_N"/>
</dbReference>
<dbReference type="InterPro" id="IPR006581">
    <property type="entry name" value="VPS10"/>
</dbReference>
<dbReference type="InterPro" id="IPR050310">
    <property type="entry name" value="VPS10-sortilin"/>
</dbReference>
<dbReference type="InterPro" id="IPR015943">
    <property type="entry name" value="WD40/YVTN_repeat-like_dom_sf"/>
</dbReference>
<dbReference type="PANTHER" id="PTHR12106">
    <property type="entry name" value="SORTILIN RELATED"/>
    <property type="match status" value="1"/>
</dbReference>
<dbReference type="PANTHER" id="PTHR12106:SF27">
    <property type="entry name" value="SORTILIN-RELATED RECEPTOR"/>
    <property type="match status" value="1"/>
</dbReference>
<dbReference type="Pfam" id="PF15902">
    <property type="entry name" value="Sortilin-Vps10"/>
    <property type="match status" value="2"/>
</dbReference>
<dbReference type="Pfam" id="PF15901">
    <property type="entry name" value="Sortilin_C"/>
    <property type="match status" value="3"/>
</dbReference>
<dbReference type="SMART" id="SM00602">
    <property type="entry name" value="VPS10"/>
    <property type="match status" value="2"/>
</dbReference>
<dbReference type="SUPFAM" id="SSF110296">
    <property type="entry name" value="Oligoxyloglucan reducing end-specific cellobiohydrolase"/>
    <property type="match status" value="1"/>
</dbReference>
<dbReference type="SUPFAM" id="SSF50939">
    <property type="entry name" value="Sialidases"/>
    <property type="match status" value="2"/>
</dbReference>
<evidence type="ECO:0000250" key="1"/>
<evidence type="ECO:0000255" key="2"/>
<evidence type="ECO:0000256" key="3">
    <source>
        <dbReference type="SAM" id="MobiDB-lite"/>
    </source>
</evidence>
<evidence type="ECO:0000305" key="4"/>
<name>VPS10_PHANO</name>
<comment type="function">
    <text evidence="1">Functions as a sorting receptor in the Golgi compartment required for the intracellular sorting and delivery of soluble vacuolar proteins, like carboxypeptidase Y (CPY) and proteinase A. Executes multiple rounds of sorting by cycling between the late Golgi and a prevacuolar endosome-like compartment (By similarity).</text>
</comment>
<comment type="subcellular location">
    <subcellularLocation>
        <location evidence="1">Golgi apparatus</location>
        <location evidence="1">trans-Golgi network membrane</location>
        <topology evidence="1">Multi-pass membrane protein</topology>
    </subcellularLocation>
    <subcellularLocation>
        <location evidence="1">Prevacuolar compartment membrane</location>
        <topology evidence="1">Multi-pass membrane protein</topology>
    </subcellularLocation>
    <text evidence="1">Cycles between the Golgi apparatus and the prevacuolar compartment.</text>
</comment>
<comment type="similarity">
    <text evidence="4">Belongs to the VPS10-related sortilin family.</text>
</comment>
<gene>
    <name type="primary">VPS10</name>
    <name type="ORF">SNOG_16552</name>
</gene>